<name>KEFF_ECOUT</name>
<gene>
    <name evidence="1" type="primary">kefF</name>
    <name type="ordered locus">UTI89_C0052</name>
</gene>
<protein>
    <recommendedName>
        <fullName evidence="1">Glutathione-regulated potassium-efflux system ancillary protein KefF</fullName>
    </recommendedName>
    <alternativeName>
        <fullName evidence="1">Quinone oxidoreductase KefF</fullName>
        <ecNumber evidence="1">1.6.5.2</ecNumber>
    </alternativeName>
</protein>
<reference key="1">
    <citation type="journal article" date="2006" name="Proc. Natl. Acad. Sci. U.S.A.">
        <title>Identification of genes subject to positive selection in uropathogenic strains of Escherichia coli: a comparative genomics approach.</title>
        <authorList>
            <person name="Chen S.L."/>
            <person name="Hung C.-S."/>
            <person name="Xu J."/>
            <person name="Reigstad C.S."/>
            <person name="Magrini V."/>
            <person name="Sabo A."/>
            <person name="Blasiar D."/>
            <person name="Bieri T."/>
            <person name="Meyer R.R."/>
            <person name="Ozersky P."/>
            <person name="Armstrong J.R."/>
            <person name="Fulton R.S."/>
            <person name="Latreille J.P."/>
            <person name="Spieth J."/>
            <person name="Hooton T.M."/>
            <person name="Mardis E.R."/>
            <person name="Hultgren S.J."/>
            <person name="Gordon J.I."/>
        </authorList>
    </citation>
    <scope>NUCLEOTIDE SEQUENCE [LARGE SCALE GENOMIC DNA]</scope>
    <source>
        <strain>UTI89 / UPEC</strain>
    </source>
</reference>
<feature type="chain" id="PRO_1000068467" description="Glutathione-regulated potassium-efflux system ancillary protein KefF">
    <location>
        <begin position="1"/>
        <end position="176"/>
    </location>
</feature>
<feature type="binding site" evidence="1">
    <location>
        <position position="8"/>
    </location>
    <ligand>
        <name>FMN</name>
        <dbReference type="ChEBI" id="CHEBI:58210"/>
    </ligand>
</feature>
<feature type="binding site" evidence="1">
    <location>
        <begin position="14"/>
        <end position="17"/>
    </location>
    <ligand>
        <name>FMN</name>
        <dbReference type="ChEBI" id="CHEBI:58210"/>
    </ligand>
</feature>
<feature type="binding site" evidence="1">
    <location>
        <begin position="65"/>
        <end position="68"/>
    </location>
    <ligand>
        <name>FMN</name>
        <dbReference type="ChEBI" id="CHEBI:58210"/>
    </ligand>
</feature>
<feature type="binding site" evidence="1">
    <location>
        <begin position="105"/>
        <end position="108"/>
    </location>
    <ligand>
        <name>FMN</name>
        <dbReference type="ChEBI" id="CHEBI:58210"/>
    </ligand>
</feature>
<keyword id="KW-0997">Cell inner membrane</keyword>
<keyword id="KW-1003">Cell membrane</keyword>
<keyword id="KW-0285">Flavoprotein</keyword>
<keyword id="KW-0288">FMN</keyword>
<keyword id="KW-0472">Membrane</keyword>
<keyword id="KW-0520">NAD</keyword>
<keyword id="KW-0560">Oxidoreductase</keyword>
<organism>
    <name type="scientific">Escherichia coli (strain UTI89 / UPEC)</name>
    <dbReference type="NCBI Taxonomy" id="364106"/>
    <lineage>
        <taxon>Bacteria</taxon>
        <taxon>Pseudomonadati</taxon>
        <taxon>Pseudomonadota</taxon>
        <taxon>Gammaproteobacteria</taxon>
        <taxon>Enterobacterales</taxon>
        <taxon>Enterobacteriaceae</taxon>
        <taxon>Escherichia</taxon>
    </lineage>
</organism>
<comment type="function">
    <text evidence="1">Regulatory subunit of a potassium efflux system that confers protection against electrophiles. Required for full activity of KefC. Shows redox enzymatic activity, but this enzymatic activity is not required for activation of KefC.</text>
</comment>
<comment type="catalytic activity">
    <reaction evidence="1">
        <text>a quinone + NADH + H(+) = a quinol + NAD(+)</text>
        <dbReference type="Rhea" id="RHEA:46160"/>
        <dbReference type="ChEBI" id="CHEBI:15378"/>
        <dbReference type="ChEBI" id="CHEBI:24646"/>
        <dbReference type="ChEBI" id="CHEBI:57540"/>
        <dbReference type="ChEBI" id="CHEBI:57945"/>
        <dbReference type="ChEBI" id="CHEBI:132124"/>
        <dbReference type="EC" id="1.6.5.2"/>
    </reaction>
</comment>
<comment type="catalytic activity">
    <reaction evidence="1">
        <text>a quinone + NADPH + H(+) = a quinol + NADP(+)</text>
        <dbReference type="Rhea" id="RHEA:46164"/>
        <dbReference type="ChEBI" id="CHEBI:15378"/>
        <dbReference type="ChEBI" id="CHEBI:24646"/>
        <dbReference type="ChEBI" id="CHEBI:57783"/>
        <dbReference type="ChEBI" id="CHEBI:58349"/>
        <dbReference type="ChEBI" id="CHEBI:132124"/>
        <dbReference type="EC" id="1.6.5.2"/>
    </reaction>
</comment>
<comment type="cofactor">
    <cofactor evidence="1">
        <name>FMN</name>
        <dbReference type="ChEBI" id="CHEBI:58210"/>
    </cofactor>
</comment>
<comment type="subunit">
    <text evidence="1">Homodimer. Interacts with KefC.</text>
</comment>
<comment type="subcellular location">
    <subcellularLocation>
        <location evidence="1">Cell inner membrane</location>
        <topology evidence="1">Peripheral membrane protein</topology>
        <orientation evidence="1">Cytoplasmic side</orientation>
    </subcellularLocation>
</comment>
<comment type="similarity">
    <text evidence="1">Belongs to the NAD(P)H dehydrogenase (quinone) family. KefF subfamily.</text>
</comment>
<sequence length="176" mass="20196">MILIIYAHPYPHYSHANKRMLEQARTLEGVEIRSLYQLYPDFNIDIAAEQEALSRADLIVWQHPMQWYSIPPLLKLWIDKVFSHGWAYGHGGTALHGKHLLWAVTTGGGESHFEIGAHPGFDVLSQPLQATAIYCGLNWLPPFAMHCTFICDDETLEGQARHYKQRLLEWQEAHHG</sequence>
<evidence type="ECO:0000255" key="1">
    <source>
        <dbReference type="HAMAP-Rule" id="MF_01414"/>
    </source>
</evidence>
<proteinExistence type="inferred from homology"/>
<accession>Q1RGF2</accession>
<dbReference type="EC" id="1.6.5.2" evidence="1"/>
<dbReference type="EMBL" id="CP000243">
    <property type="protein sequence ID" value="ABE05562.1"/>
    <property type="molecule type" value="Genomic_DNA"/>
</dbReference>
<dbReference type="RefSeq" id="WP_000600749.1">
    <property type="nucleotide sequence ID" value="NZ_CP064825.1"/>
</dbReference>
<dbReference type="SMR" id="Q1RGF2"/>
<dbReference type="KEGG" id="eci:UTI89_C0052"/>
<dbReference type="HOGENOM" id="CLU_058643_0_1_6"/>
<dbReference type="Proteomes" id="UP000001952">
    <property type="component" value="Chromosome"/>
</dbReference>
<dbReference type="GO" id="GO:0005886">
    <property type="term" value="C:plasma membrane"/>
    <property type="evidence" value="ECO:0007669"/>
    <property type="project" value="UniProtKB-SubCell"/>
</dbReference>
<dbReference type="GO" id="GO:0009055">
    <property type="term" value="F:electron transfer activity"/>
    <property type="evidence" value="ECO:0007669"/>
    <property type="project" value="TreeGrafter"/>
</dbReference>
<dbReference type="GO" id="GO:0010181">
    <property type="term" value="F:FMN binding"/>
    <property type="evidence" value="ECO:0007669"/>
    <property type="project" value="UniProtKB-UniRule"/>
</dbReference>
<dbReference type="GO" id="GO:0050136">
    <property type="term" value="F:NADH:ubiquinone reductase (non-electrogenic) activity"/>
    <property type="evidence" value="ECO:0007669"/>
    <property type="project" value="RHEA"/>
</dbReference>
<dbReference type="GO" id="GO:0008753">
    <property type="term" value="F:NADPH dehydrogenase (quinone) activity"/>
    <property type="evidence" value="ECO:0007669"/>
    <property type="project" value="RHEA"/>
</dbReference>
<dbReference type="GO" id="GO:1901381">
    <property type="term" value="P:positive regulation of potassium ion transmembrane transport"/>
    <property type="evidence" value="ECO:0007669"/>
    <property type="project" value="UniProtKB-UniRule"/>
</dbReference>
<dbReference type="GO" id="GO:0006813">
    <property type="term" value="P:potassium ion transport"/>
    <property type="evidence" value="ECO:0007669"/>
    <property type="project" value="InterPro"/>
</dbReference>
<dbReference type="FunFam" id="3.40.50.360:FF:000008">
    <property type="entry name" value="Glutathione-regulated potassium-efflux system ancillary protein KefF"/>
    <property type="match status" value="1"/>
</dbReference>
<dbReference type="Gene3D" id="3.40.50.360">
    <property type="match status" value="1"/>
</dbReference>
<dbReference type="HAMAP" id="MF_01414">
    <property type="entry name" value="K_H_efflux_KefF"/>
    <property type="match status" value="1"/>
</dbReference>
<dbReference type="InterPro" id="IPR003680">
    <property type="entry name" value="Flavodoxin_fold"/>
</dbReference>
<dbReference type="InterPro" id="IPR029039">
    <property type="entry name" value="Flavoprotein-like_sf"/>
</dbReference>
<dbReference type="InterPro" id="IPR023948">
    <property type="entry name" value="K_H_efflux_KefF"/>
</dbReference>
<dbReference type="InterPro" id="IPR046980">
    <property type="entry name" value="KefG/KefF"/>
</dbReference>
<dbReference type="NCBIfam" id="NF002044">
    <property type="entry name" value="PRK00871.1"/>
    <property type="match status" value="1"/>
</dbReference>
<dbReference type="PANTHER" id="PTHR47307:SF2">
    <property type="entry name" value="GLUTATHIONE-REGULATED POTASSIUM-EFFLUX SYSTEM ANCILLARY PROTEIN KEFF"/>
    <property type="match status" value="1"/>
</dbReference>
<dbReference type="PANTHER" id="PTHR47307">
    <property type="entry name" value="GLUTATHIONE-REGULATED POTASSIUM-EFFLUX SYSTEM ANCILLARY PROTEIN KEFG"/>
    <property type="match status" value="1"/>
</dbReference>
<dbReference type="Pfam" id="PF02525">
    <property type="entry name" value="Flavodoxin_2"/>
    <property type="match status" value="1"/>
</dbReference>
<dbReference type="SUPFAM" id="SSF52218">
    <property type="entry name" value="Flavoproteins"/>
    <property type="match status" value="1"/>
</dbReference>